<accession>Q6GF73</accession>
<evidence type="ECO:0000255" key="1">
    <source>
        <dbReference type="HAMAP-Rule" id="MF_00984"/>
    </source>
</evidence>
<evidence type="ECO:0000256" key="2">
    <source>
        <dbReference type="SAM" id="MobiDB-lite"/>
    </source>
</evidence>
<protein>
    <recommendedName>
        <fullName evidence="1">Single-stranded DNA-binding protein</fullName>
        <shortName evidence="1">SSB</shortName>
    </recommendedName>
</protein>
<keyword id="KW-0227">DNA damage</keyword>
<keyword id="KW-0233">DNA recombination</keyword>
<keyword id="KW-0234">DNA repair</keyword>
<keyword id="KW-0235">DNA replication</keyword>
<keyword id="KW-0238">DNA-binding</keyword>
<dbReference type="EMBL" id="BX571856">
    <property type="protein sequence ID" value="CAG41066.1"/>
    <property type="molecule type" value="Genomic_DNA"/>
</dbReference>
<dbReference type="RefSeq" id="WP_000934764.1">
    <property type="nucleotide sequence ID" value="NC_002952.2"/>
</dbReference>
<dbReference type="SMR" id="Q6GF73"/>
<dbReference type="KEGG" id="sar:SAR2083"/>
<dbReference type="HOGENOM" id="CLU_078758_6_1_9"/>
<dbReference type="Proteomes" id="UP000000596">
    <property type="component" value="Chromosome"/>
</dbReference>
<dbReference type="GO" id="GO:0009295">
    <property type="term" value="C:nucleoid"/>
    <property type="evidence" value="ECO:0007669"/>
    <property type="project" value="TreeGrafter"/>
</dbReference>
<dbReference type="GO" id="GO:0003697">
    <property type="term" value="F:single-stranded DNA binding"/>
    <property type="evidence" value="ECO:0007669"/>
    <property type="project" value="UniProtKB-UniRule"/>
</dbReference>
<dbReference type="GO" id="GO:0006310">
    <property type="term" value="P:DNA recombination"/>
    <property type="evidence" value="ECO:0007669"/>
    <property type="project" value="UniProtKB-UniRule"/>
</dbReference>
<dbReference type="GO" id="GO:0006281">
    <property type="term" value="P:DNA repair"/>
    <property type="evidence" value="ECO:0007669"/>
    <property type="project" value="UniProtKB-UniRule"/>
</dbReference>
<dbReference type="GO" id="GO:0006260">
    <property type="term" value="P:DNA replication"/>
    <property type="evidence" value="ECO:0007669"/>
    <property type="project" value="UniProtKB-UniRule"/>
</dbReference>
<dbReference type="CDD" id="cd04496">
    <property type="entry name" value="SSB_OBF"/>
    <property type="match status" value="1"/>
</dbReference>
<dbReference type="FunFam" id="2.40.50.140:FF:000084">
    <property type="entry name" value="Single-stranded DNA-binding protein"/>
    <property type="match status" value="1"/>
</dbReference>
<dbReference type="Gene3D" id="2.40.50.140">
    <property type="entry name" value="Nucleic acid-binding proteins"/>
    <property type="match status" value="1"/>
</dbReference>
<dbReference type="HAMAP" id="MF_00984">
    <property type="entry name" value="SSB"/>
    <property type="match status" value="1"/>
</dbReference>
<dbReference type="InterPro" id="IPR012340">
    <property type="entry name" value="NA-bd_OB-fold"/>
</dbReference>
<dbReference type="InterPro" id="IPR000424">
    <property type="entry name" value="Primosome_PriB/ssb"/>
</dbReference>
<dbReference type="InterPro" id="IPR011344">
    <property type="entry name" value="ssDNA-bd"/>
</dbReference>
<dbReference type="NCBIfam" id="TIGR00621">
    <property type="entry name" value="ssb"/>
    <property type="match status" value="1"/>
</dbReference>
<dbReference type="PANTHER" id="PTHR10302">
    <property type="entry name" value="SINGLE-STRANDED DNA-BINDING PROTEIN"/>
    <property type="match status" value="1"/>
</dbReference>
<dbReference type="PANTHER" id="PTHR10302:SF27">
    <property type="entry name" value="SINGLE-STRANDED DNA-BINDING PROTEIN"/>
    <property type="match status" value="1"/>
</dbReference>
<dbReference type="Pfam" id="PF00436">
    <property type="entry name" value="SSB"/>
    <property type="match status" value="1"/>
</dbReference>
<dbReference type="PIRSF" id="PIRSF002070">
    <property type="entry name" value="SSB"/>
    <property type="match status" value="1"/>
</dbReference>
<dbReference type="SUPFAM" id="SSF50249">
    <property type="entry name" value="Nucleic acid-binding proteins"/>
    <property type="match status" value="1"/>
</dbReference>
<dbReference type="PROSITE" id="PS50935">
    <property type="entry name" value="SSB"/>
    <property type="match status" value="1"/>
</dbReference>
<comment type="function">
    <text evidence="1">Plays an important role in DNA replication, recombination and repair. Binds to ssDNA and to an array of partner proteins to recruit them to their sites of action during DNA metabolism.</text>
</comment>
<comment type="subunit">
    <text evidence="1">Homotetramer.</text>
</comment>
<feature type="chain" id="PRO_0000096102" description="Single-stranded DNA-binding protein">
    <location>
        <begin position="1"/>
        <end position="156"/>
    </location>
</feature>
<feature type="domain" description="SSB" evidence="1">
    <location>
        <begin position="1"/>
        <end position="104"/>
    </location>
</feature>
<feature type="region of interest" description="Disordered" evidence="2">
    <location>
        <begin position="104"/>
        <end position="156"/>
    </location>
</feature>
<feature type="short sequence motif" description="Important for interaction with partner proteins" evidence="1">
    <location>
        <begin position="151"/>
        <end position="156"/>
    </location>
</feature>
<feature type="compositionally biased region" description="Low complexity" evidence="2">
    <location>
        <begin position="112"/>
        <end position="128"/>
    </location>
</feature>
<reference key="1">
    <citation type="journal article" date="2004" name="Proc. Natl. Acad. Sci. U.S.A.">
        <title>Complete genomes of two clinical Staphylococcus aureus strains: evidence for the rapid evolution of virulence and drug resistance.</title>
        <authorList>
            <person name="Holden M.T.G."/>
            <person name="Feil E.J."/>
            <person name="Lindsay J.A."/>
            <person name="Peacock S.J."/>
            <person name="Day N.P.J."/>
            <person name="Enright M.C."/>
            <person name="Foster T.J."/>
            <person name="Moore C.E."/>
            <person name="Hurst L."/>
            <person name="Atkin R."/>
            <person name="Barron A."/>
            <person name="Bason N."/>
            <person name="Bentley S.D."/>
            <person name="Chillingworth C."/>
            <person name="Chillingworth T."/>
            <person name="Churcher C."/>
            <person name="Clark L."/>
            <person name="Corton C."/>
            <person name="Cronin A."/>
            <person name="Doggett J."/>
            <person name="Dowd L."/>
            <person name="Feltwell T."/>
            <person name="Hance Z."/>
            <person name="Harris B."/>
            <person name="Hauser H."/>
            <person name="Holroyd S."/>
            <person name="Jagels K."/>
            <person name="James K.D."/>
            <person name="Lennard N."/>
            <person name="Line A."/>
            <person name="Mayes R."/>
            <person name="Moule S."/>
            <person name="Mungall K."/>
            <person name="Ormond D."/>
            <person name="Quail M.A."/>
            <person name="Rabbinowitsch E."/>
            <person name="Rutherford K.M."/>
            <person name="Sanders M."/>
            <person name="Sharp S."/>
            <person name="Simmonds M."/>
            <person name="Stevens K."/>
            <person name="Whitehead S."/>
            <person name="Barrell B.G."/>
            <person name="Spratt B.G."/>
            <person name="Parkhill J."/>
        </authorList>
    </citation>
    <scope>NUCLEOTIDE SEQUENCE [LARGE SCALE GENOMIC DNA]</scope>
    <source>
        <strain>MRSA252</strain>
    </source>
</reference>
<sequence>MLNRTILVGRLTRDPELRTTQSGVNVASFTLAVNRTFTNAQGEREADFINIIVFKKQAENVNKYLSKGSLAGVDGRLQTRNYENKEGQRVYVTEVVADSIQFLEPKNSNDTQQDLYQQQVQQTRGQSQYSNNKPVKDNPFANANGPIELNDDDLPF</sequence>
<organism>
    <name type="scientific">Staphylococcus aureus (strain MRSA252)</name>
    <dbReference type="NCBI Taxonomy" id="282458"/>
    <lineage>
        <taxon>Bacteria</taxon>
        <taxon>Bacillati</taxon>
        <taxon>Bacillota</taxon>
        <taxon>Bacilli</taxon>
        <taxon>Bacillales</taxon>
        <taxon>Staphylococcaceae</taxon>
        <taxon>Staphylococcus</taxon>
    </lineage>
</organism>
<proteinExistence type="inferred from homology"/>
<name>SSB_STAAR</name>
<gene>
    <name type="primary">ssb</name>
    <name type="ordered locus">SAR2083</name>
</gene>